<gene>
    <name evidence="1" type="primary">rpsU</name>
    <name type="ordered locus">Sputcn32_1107</name>
</gene>
<proteinExistence type="inferred from homology"/>
<evidence type="ECO:0000255" key="1">
    <source>
        <dbReference type="HAMAP-Rule" id="MF_00358"/>
    </source>
</evidence>
<evidence type="ECO:0000305" key="2"/>
<name>RS21_SHEPC</name>
<organism>
    <name type="scientific">Shewanella putrefaciens (strain CN-32 / ATCC BAA-453)</name>
    <dbReference type="NCBI Taxonomy" id="319224"/>
    <lineage>
        <taxon>Bacteria</taxon>
        <taxon>Pseudomonadati</taxon>
        <taxon>Pseudomonadota</taxon>
        <taxon>Gammaproteobacteria</taxon>
        <taxon>Alteromonadales</taxon>
        <taxon>Shewanellaceae</taxon>
        <taxon>Shewanella</taxon>
    </lineage>
</organism>
<protein>
    <recommendedName>
        <fullName evidence="1">Small ribosomal subunit protein bS21</fullName>
    </recommendedName>
    <alternativeName>
        <fullName evidence="2">30S ribosomal protein S21</fullName>
    </alternativeName>
</protein>
<comment type="similarity">
    <text evidence="1">Belongs to the bacterial ribosomal protein bS21 family.</text>
</comment>
<reference key="1">
    <citation type="submission" date="2007-04" db="EMBL/GenBank/DDBJ databases">
        <title>Complete sequence of Shewanella putrefaciens CN-32.</title>
        <authorList>
            <consortium name="US DOE Joint Genome Institute"/>
            <person name="Copeland A."/>
            <person name="Lucas S."/>
            <person name="Lapidus A."/>
            <person name="Barry K."/>
            <person name="Detter J.C."/>
            <person name="Glavina del Rio T."/>
            <person name="Hammon N."/>
            <person name="Israni S."/>
            <person name="Dalin E."/>
            <person name="Tice H."/>
            <person name="Pitluck S."/>
            <person name="Chain P."/>
            <person name="Malfatti S."/>
            <person name="Shin M."/>
            <person name="Vergez L."/>
            <person name="Schmutz J."/>
            <person name="Larimer F."/>
            <person name="Land M."/>
            <person name="Hauser L."/>
            <person name="Kyrpides N."/>
            <person name="Mikhailova N."/>
            <person name="Romine M.F."/>
            <person name="Fredrickson J."/>
            <person name="Tiedje J."/>
            <person name="Richardson P."/>
        </authorList>
    </citation>
    <scope>NUCLEOTIDE SEQUENCE [LARGE SCALE GENOMIC DNA]</scope>
    <source>
        <strain>CN-32 / ATCC BAA-453</strain>
    </source>
</reference>
<accession>A4Y4F2</accession>
<feature type="chain" id="PRO_1000005172" description="Small ribosomal subunit protein bS21">
    <location>
        <begin position="1"/>
        <end position="71"/>
    </location>
</feature>
<dbReference type="EMBL" id="CP000681">
    <property type="protein sequence ID" value="ABP74835.1"/>
    <property type="molecule type" value="Genomic_DNA"/>
</dbReference>
<dbReference type="SMR" id="A4Y4F2"/>
<dbReference type="STRING" id="319224.Sputcn32_1107"/>
<dbReference type="KEGG" id="spc:Sputcn32_1107"/>
<dbReference type="eggNOG" id="COG0828">
    <property type="taxonomic scope" value="Bacteria"/>
</dbReference>
<dbReference type="HOGENOM" id="CLU_159258_1_0_6"/>
<dbReference type="GO" id="GO:1990904">
    <property type="term" value="C:ribonucleoprotein complex"/>
    <property type="evidence" value="ECO:0007669"/>
    <property type="project" value="UniProtKB-KW"/>
</dbReference>
<dbReference type="GO" id="GO:0005840">
    <property type="term" value="C:ribosome"/>
    <property type="evidence" value="ECO:0007669"/>
    <property type="project" value="UniProtKB-KW"/>
</dbReference>
<dbReference type="GO" id="GO:0003735">
    <property type="term" value="F:structural constituent of ribosome"/>
    <property type="evidence" value="ECO:0007669"/>
    <property type="project" value="InterPro"/>
</dbReference>
<dbReference type="GO" id="GO:0006412">
    <property type="term" value="P:translation"/>
    <property type="evidence" value="ECO:0007669"/>
    <property type="project" value="UniProtKB-UniRule"/>
</dbReference>
<dbReference type="Gene3D" id="1.20.5.1150">
    <property type="entry name" value="Ribosomal protein S8"/>
    <property type="match status" value="1"/>
</dbReference>
<dbReference type="HAMAP" id="MF_00358">
    <property type="entry name" value="Ribosomal_bS21"/>
    <property type="match status" value="1"/>
</dbReference>
<dbReference type="InterPro" id="IPR001911">
    <property type="entry name" value="Ribosomal_bS21"/>
</dbReference>
<dbReference type="InterPro" id="IPR018278">
    <property type="entry name" value="Ribosomal_bS21_CS"/>
</dbReference>
<dbReference type="InterPro" id="IPR038380">
    <property type="entry name" value="Ribosomal_bS21_sf"/>
</dbReference>
<dbReference type="NCBIfam" id="TIGR00030">
    <property type="entry name" value="S21p"/>
    <property type="match status" value="1"/>
</dbReference>
<dbReference type="PANTHER" id="PTHR21109">
    <property type="entry name" value="MITOCHONDRIAL 28S RIBOSOMAL PROTEIN S21"/>
    <property type="match status" value="1"/>
</dbReference>
<dbReference type="PANTHER" id="PTHR21109:SF22">
    <property type="entry name" value="SMALL RIBOSOMAL SUBUNIT PROTEIN BS21"/>
    <property type="match status" value="1"/>
</dbReference>
<dbReference type="Pfam" id="PF01165">
    <property type="entry name" value="Ribosomal_S21"/>
    <property type="match status" value="1"/>
</dbReference>
<dbReference type="PRINTS" id="PR00976">
    <property type="entry name" value="RIBOSOMALS21"/>
</dbReference>
<dbReference type="PROSITE" id="PS01181">
    <property type="entry name" value="RIBOSOMAL_S21"/>
    <property type="match status" value="1"/>
</dbReference>
<sequence length="71" mass="8345">MPIIKVRENEPFDVALRRFKRSCEKAGILADVRAREFYEKPTTARKRAKAAAVKRLAKKLSRENARRVRLY</sequence>
<keyword id="KW-0687">Ribonucleoprotein</keyword>
<keyword id="KW-0689">Ribosomal protein</keyword>